<sequence>MDWLAKYWWILVIVFLVGVLLNVIKDLKRVDHKKFLANKPELPPHRDFNDKWDDDDDWPKKDQPKK</sequence>
<keyword id="KW-1003">Cell membrane</keyword>
<keyword id="KW-0472">Membrane</keyword>
<keyword id="KW-0812">Transmembrane</keyword>
<keyword id="KW-1133">Transmembrane helix</keyword>
<accession>A8A2W4</accession>
<protein>
    <recommendedName>
        <fullName evidence="1">UPF0370 protein YpfN</fullName>
    </recommendedName>
</protein>
<feature type="chain" id="PRO_1000069081" description="UPF0370 protein YpfN">
    <location>
        <begin position="1"/>
        <end position="66"/>
    </location>
</feature>
<feature type="transmembrane region" description="Helical" evidence="1">
    <location>
        <begin position="4"/>
        <end position="24"/>
    </location>
</feature>
<feature type="region of interest" description="Disordered" evidence="2">
    <location>
        <begin position="39"/>
        <end position="66"/>
    </location>
</feature>
<feature type="compositionally biased region" description="Basic and acidic residues" evidence="2">
    <location>
        <begin position="42"/>
        <end position="51"/>
    </location>
</feature>
<dbReference type="EMBL" id="CP000802">
    <property type="protein sequence ID" value="ABV06868.1"/>
    <property type="molecule type" value="Genomic_DNA"/>
</dbReference>
<dbReference type="RefSeq" id="WP_000383836.1">
    <property type="nucleotide sequence ID" value="NC_009800.1"/>
</dbReference>
<dbReference type="SMR" id="A8A2W4"/>
<dbReference type="KEGG" id="ecx:EcHS_A2603"/>
<dbReference type="HOGENOM" id="CLU_198936_0_0_6"/>
<dbReference type="GO" id="GO:0005886">
    <property type="term" value="C:plasma membrane"/>
    <property type="evidence" value="ECO:0007669"/>
    <property type="project" value="UniProtKB-SubCell"/>
</dbReference>
<dbReference type="HAMAP" id="MF_01566">
    <property type="entry name" value="UPF0370"/>
    <property type="match status" value="1"/>
</dbReference>
<dbReference type="InterPro" id="IPR020910">
    <property type="entry name" value="UPF0370"/>
</dbReference>
<dbReference type="NCBIfam" id="NF010185">
    <property type="entry name" value="PRK13664.1"/>
    <property type="match status" value="1"/>
</dbReference>
<dbReference type="Pfam" id="PF13980">
    <property type="entry name" value="UPF0370"/>
    <property type="match status" value="1"/>
</dbReference>
<name>YPFN_ECOHS</name>
<organism>
    <name type="scientific">Escherichia coli O9:H4 (strain HS)</name>
    <dbReference type="NCBI Taxonomy" id="331112"/>
    <lineage>
        <taxon>Bacteria</taxon>
        <taxon>Pseudomonadati</taxon>
        <taxon>Pseudomonadota</taxon>
        <taxon>Gammaproteobacteria</taxon>
        <taxon>Enterobacterales</taxon>
        <taxon>Enterobacteriaceae</taxon>
        <taxon>Escherichia</taxon>
    </lineage>
</organism>
<evidence type="ECO:0000255" key="1">
    <source>
        <dbReference type="HAMAP-Rule" id="MF_01566"/>
    </source>
</evidence>
<evidence type="ECO:0000256" key="2">
    <source>
        <dbReference type="SAM" id="MobiDB-lite"/>
    </source>
</evidence>
<proteinExistence type="inferred from homology"/>
<reference key="1">
    <citation type="journal article" date="2008" name="J. Bacteriol.">
        <title>The pangenome structure of Escherichia coli: comparative genomic analysis of E. coli commensal and pathogenic isolates.</title>
        <authorList>
            <person name="Rasko D.A."/>
            <person name="Rosovitz M.J."/>
            <person name="Myers G.S.A."/>
            <person name="Mongodin E.F."/>
            <person name="Fricke W.F."/>
            <person name="Gajer P."/>
            <person name="Crabtree J."/>
            <person name="Sebaihia M."/>
            <person name="Thomson N.R."/>
            <person name="Chaudhuri R."/>
            <person name="Henderson I.R."/>
            <person name="Sperandio V."/>
            <person name="Ravel J."/>
        </authorList>
    </citation>
    <scope>NUCLEOTIDE SEQUENCE [LARGE SCALE GENOMIC DNA]</scope>
    <source>
        <strain>HS</strain>
    </source>
</reference>
<comment type="subcellular location">
    <subcellularLocation>
        <location evidence="1">Cell membrane</location>
        <topology evidence="1">Single-pass membrane protein</topology>
    </subcellularLocation>
</comment>
<comment type="similarity">
    <text evidence="1">Belongs to the UPF0370 family.</text>
</comment>
<gene>
    <name evidence="1" type="primary">ypfN</name>
    <name type="ordered locus">EcHS_A2603</name>
</gene>